<protein>
    <recommendedName>
        <fullName evidence="1">DNA-directed RNA polymerase subunit beta'</fullName>
        <shortName evidence="1">RNAP subunit beta'</shortName>
        <ecNumber evidence="1">2.7.7.6</ecNumber>
    </recommendedName>
    <alternativeName>
        <fullName evidence="1">RNA polymerase subunit beta'</fullName>
    </alternativeName>
    <alternativeName>
        <fullName evidence="1">Transcriptase subunit beta'</fullName>
    </alternativeName>
</protein>
<feature type="chain" id="PRO_0000225560" description="DNA-directed RNA polymerase subunit beta'">
    <location>
        <begin position="1"/>
        <end position="1389"/>
    </location>
</feature>
<feature type="binding site" evidence="1">
    <location>
        <position position="73"/>
    </location>
    <ligand>
        <name>Zn(2+)</name>
        <dbReference type="ChEBI" id="CHEBI:29105"/>
        <label>1</label>
    </ligand>
</feature>
<feature type="binding site" evidence="1">
    <location>
        <position position="75"/>
    </location>
    <ligand>
        <name>Zn(2+)</name>
        <dbReference type="ChEBI" id="CHEBI:29105"/>
        <label>1</label>
    </ligand>
</feature>
<feature type="binding site" evidence="1">
    <location>
        <position position="88"/>
    </location>
    <ligand>
        <name>Zn(2+)</name>
        <dbReference type="ChEBI" id="CHEBI:29105"/>
        <label>1</label>
    </ligand>
</feature>
<feature type="binding site" evidence="1">
    <location>
        <position position="91"/>
    </location>
    <ligand>
        <name>Zn(2+)</name>
        <dbReference type="ChEBI" id="CHEBI:29105"/>
        <label>1</label>
    </ligand>
</feature>
<feature type="binding site" evidence="1">
    <location>
        <position position="464"/>
    </location>
    <ligand>
        <name>Mg(2+)</name>
        <dbReference type="ChEBI" id="CHEBI:18420"/>
    </ligand>
</feature>
<feature type="binding site" evidence="1">
    <location>
        <position position="466"/>
    </location>
    <ligand>
        <name>Mg(2+)</name>
        <dbReference type="ChEBI" id="CHEBI:18420"/>
    </ligand>
</feature>
<feature type="binding site" evidence="1">
    <location>
        <position position="468"/>
    </location>
    <ligand>
        <name>Mg(2+)</name>
        <dbReference type="ChEBI" id="CHEBI:18420"/>
    </ligand>
</feature>
<feature type="binding site" evidence="1">
    <location>
        <position position="810"/>
    </location>
    <ligand>
        <name>Zn(2+)</name>
        <dbReference type="ChEBI" id="CHEBI:29105"/>
        <label>2</label>
    </ligand>
</feature>
<feature type="binding site" evidence="1">
    <location>
        <position position="884"/>
    </location>
    <ligand>
        <name>Zn(2+)</name>
        <dbReference type="ChEBI" id="CHEBI:29105"/>
        <label>2</label>
    </ligand>
</feature>
<feature type="binding site" evidence="1">
    <location>
        <position position="891"/>
    </location>
    <ligand>
        <name>Zn(2+)</name>
        <dbReference type="ChEBI" id="CHEBI:29105"/>
        <label>2</label>
    </ligand>
</feature>
<feature type="binding site" evidence="1">
    <location>
        <position position="894"/>
    </location>
    <ligand>
        <name>Zn(2+)</name>
        <dbReference type="ChEBI" id="CHEBI:29105"/>
        <label>2</label>
    </ligand>
</feature>
<sequence>MKKELTDLFKNSEVSEAQNFNSIKITLASPEKIKSWTYGEIKKPETINYRTFRPEKDGLFCARIFGPIKDYECLCGKYKRMKFRGIICEKCGVEVTKSNVRRERMGHINLATPVAHIWFLKSLPSRISLAVDMKLKEVERVLYFENFIVIEPGLTGLQKNQLLNEEELAKYQDEFGEESFEAGIGAEAILSILKSMDLELERKLLINTIKETKSKVNEERSIKRLKLIESFIETGQKPEWMILTVIPVIPPELRPLVPLDGGRFATSDLNDLYRRVINRNNRLKRLMDLKAPDIIVRNEKRMLQESVDALFDNGRRGRVITGTGKRPLKSLAEMLKGKQGRFRQNLLGKRVDYSGRSVIVVGPDLKLHECGLPKKMALELFKPFLYARLNKLGLASTIKQAKKLVEKETNAVWDALELIVREHPVLLNRAPTLHRLGVQAFEPKLIEGDAIELHPLCCAAFNADFDGDQMAVHVPLSLEAQLEARILMLSTNNILSPSNGKPIIVPSQDMILGLYYLSQAPFQTEKPDGYFINNDEIEHALSTGQIKVHSTIVSRFETLDEKGNKRVEKHTTTAGRFLLANLLPKHKDITFSMIDRLLPKKTVSEIIDSVFRFCGQKTTVIFCDHLKDLGFKHAFKAGISFGKDDLVIPANKGQLIEDTKKLIADYENQYSEGLITRGEKYNKVVDAWSKCTDKVAGEMMRGISATESTPDGMKINSVFMMADSGARGSAAQMKQLAGMRGLIAKPSGEIIETPIISNFKEGLTALEYFNSTHGARKGLADTALKTASSGYLTRRLCDVAQDLTISKIKCDNPGFIELAEILEGGNVVVSLSERALGRVTAFDVKNPITGEVVIKKETMIDEAGCDKIDAAGVKFIKAYSVMTCSSKLGVCATCYGRDLSRGKMVHVGEAIGMISAQSIGEPGTQLTMRTFHVGGTASVKQESQIVTKTAGTLKIINSNLLEDSKKNLIVMGRNTQLSIEDNNGVQVAVYKVAYGSKLFFQNGDKVKANEKICEWDPYTTPVIAEKSGIAGYVDLIDGVSIQETTDDATGISSKSVIDWRAQSKNTDLKPRITLRDDKGNVIKKADDNEARYYLVPDSILSVKDGQKIFAGDIIARLPKETTKTKDITGGLPRVAELFEARKAKDSAIIAENDGQVLFGKEVRGKQRISIQPDNGEPSNYLIPKGKHINFNQGEKIKKGEYLLDGQPLPHDILRILGIKDLTEYFVNQVQEVYRLQGVIINDKHIETILRQMLKKVEIKESGDSSYLPGEMIDRIKFDNTNEKLVAEGKNPASGERVLMGITKASLQTESFISAASFQETTRVLTDAAIKGKVDPLNGLKENVIVGRLVPAGTGHIKNKWNKNAIDADNKFLAEQEKIEPLETTETPAN</sequence>
<gene>
    <name evidence="1" type="primary">rpoC</name>
    <name type="ordered locus">SAR11_1122</name>
</gene>
<organism>
    <name type="scientific">Pelagibacter ubique (strain HTCC1062)</name>
    <dbReference type="NCBI Taxonomy" id="335992"/>
    <lineage>
        <taxon>Bacteria</taxon>
        <taxon>Pseudomonadati</taxon>
        <taxon>Pseudomonadota</taxon>
        <taxon>Alphaproteobacteria</taxon>
        <taxon>Candidatus Pelagibacterales</taxon>
        <taxon>Candidatus Pelagibacteraceae</taxon>
        <taxon>Candidatus Pelagibacter</taxon>
    </lineage>
</organism>
<reference key="1">
    <citation type="journal article" date="2005" name="Science">
        <title>Genome streamlining in a cosmopolitan oceanic bacterium.</title>
        <authorList>
            <person name="Giovannoni S.J."/>
            <person name="Tripp H.J."/>
            <person name="Givan S."/>
            <person name="Podar M."/>
            <person name="Vergin K.L."/>
            <person name="Baptista D."/>
            <person name="Bibbs L."/>
            <person name="Eads J."/>
            <person name="Richardson T.H."/>
            <person name="Noordewier M."/>
            <person name="Rappe M.S."/>
            <person name="Short J.M."/>
            <person name="Carrington J.C."/>
            <person name="Mathur E.J."/>
        </authorList>
    </citation>
    <scope>NUCLEOTIDE SEQUENCE [LARGE SCALE GENOMIC DNA]</scope>
    <source>
        <strain>HTCC1062</strain>
    </source>
</reference>
<evidence type="ECO:0000255" key="1">
    <source>
        <dbReference type="HAMAP-Rule" id="MF_01322"/>
    </source>
</evidence>
<name>RPOC_PELUB</name>
<proteinExistence type="inferred from homology"/>
<comment type="function">
    <text evidence="1">DNA-dependent RNA polymerase catalyzes the transcription of DNA into RNA using the four ribonucleoside triphosphates as substrates.</text>
</comment>
<comment type="catalytic activity">
    <reaction evidence="1">
        <text>RNA(n) + a ribonucleoside 5'-triphosphate = RNA(n+1) + diphosphate</text>
        <dbReference type="Rhea" id="RHEA:21248"/>
        <dbReference type="Rhea" id="RHEA-COMP:14527"/>
        <dbReference type="Rhea" id="RHEA-COMP:17342"/>
        <dbReference type="ChEBI" id="CHEBI:33019"/>
        <dbReference type="ChEBI" id="CHEBI:61557"/>
        <dbReference type="ChEBI" id="CHEBI:140395"/>
        <dbReference type="EC" id="2.7.7.6"/>
    </reaction>
</comment>
<comment type="cofactor">
    <cofactor evidence="1">
        <name>Mg(2+)</name>
        <dbReference type="ChEBI" id="CHEBI:18420"/>
    </cofactor>
    <text evidence="1">Binds 1 Mg(2+) ion per subunit.</text>
</comment>
<comment type="cofactor">
    <cofactor evidence="1">
        <name>Zn(2+)</name>
        <dbReference type="ChEBI" id="CHEBI:29105"/>
    </cofactor>
    <text evidence="1">Binds 2 Zn(2+) ions per subunit.</text>
</comment>
<comment type="subunit">
    <text evidence="1">The RNAP catalytic core consists of 2 alpha, 1 beta, 1 beta' and 1 omega subunit. When a sigma factor is associated with the core the holoenzyme is formed, which can initiate transcription.</text>
</comment>
<comment type="similarity">
    <text evidence="1">Belongs to the RNA polymerase beta' chain family.</text>
</comment>
<dbReference type="EC" id="2.7.7.6" evidence="1"/>
<dbReference type="EMBL" id="CP000084">
    <property type="protein sequence ID" value="AAZ21925.1"/>
    <property type="molecule type" value="Genomic_DNA"/>
</dbReference>
<dbReference type="RefSeq" id="WP_011282158.1">
    <property type="nucleotide sequence ID" value="NC_007205.1"/>
</dbReference>
<dbReference type="SMR" id="Q4FLL3"/>
<dbReference type="STRING" id="335992.SAR11_1122"/>
<dbReference type="GeneID" id="66295611"/>
<dbReference type="KEGG" id="pub:SAR11_1122"/>
<dbReference type="eggNOG" id="COG0086">
    <property type="taxonomic scope" value="Bacteria"/>
</dbReference>
<dbReference type="HOGENOM" id="CLU_000524_3_1_5"/>
<dbReference type="OrthoDB" id="9815296at2"/>
<dbReference type="Proteomes" id="UP000002528">
    <property type="component" value="Chromosome"/>
</dbReference>
<dbReference type="GO" id="GO:0000428">
    <property type="term" value="C:DNA-directed RNA polymerase complex"/>
    <property type="evidence" value="ECO:0007669"/>
    <property type="project" value="UniProtKB-KW"/>
</dbReference>
<dbReference type="GO" id="GO:0003677">
    <property type="term" value="F:DNA binding"/>
    <property type="evidence" value="ECO:0007669"/>
    <property type="project" value="UniProtKB-UniRule"/>
</dbReference>
<dbReference type="GO" id="GO:0003899">
    <property type="term" value="F:DNA-directed RNA polymerase activity"/>
    <property type="evidence" value="ECO:0007669"/>
    <property type="project" value="UniProtKB-UniRule"/>
</dbReference>
<dbReference type="GO" id="GO:0000287">
    <property type="term" value="F:magnesium ion binding"/>
    <property type="evidence" value="ECO:0007669"/>
    <property type="project" value="UniProtKB-UniRule"/>
</dbReference>
<dbReference type="GO" id="GO:0008270">
    <property type="term" value="F:zinc ion binding"/>
    <property type="evidence" value="ECO:0007669"/>
    <property type="project" value="UniProtKB-UniRule"/>
</dbReference>
<dbReference type="GO" id="GO:0006351">
    <property type="term" value="P:DNA-templated transcription"/>
    <property type="evidence" value="ECO:0007669"/>
    <property type="project" value="UniProtKB-UniRule"/>
</dbReference>
<dbReference type="CDD" id="cd02655">
    <property type="entry name" value="RNAP_beta'_C"/>
    <property type="match status" value="1"/>
</dbReference>
<dbReference type="CDD" id="cd01609">
    <property type="entry name" value="RNAP_beta'_N"/>
    <property type="match status" value="1"/>
</dbReference>
<dbReference type="Gene3D" id="1.10.132.30">
    <property type="match status" value="1"/>
</dbReference>
<dbReference type="Gene3D" id="1.10.150.390">
    <property type="match status" value="1"/>
</dbReference>
<dbReference type="Gene3D" id="1.10.1790.20">
    <property type="match status" value="1"/>
</dbReference>
<dbReference type="Gene3D" id="1.10.40.90">
    <property type="match status" value="1"/>
</dbReference>
<dbReference type="Gene3D" id="2.40.40.20">
    <property type="match status" value="1"/>
</dbReference>
<dbReference type="Gene3D" id="2.40.50.100">
    <property type="match status" value="3"/>
</dbReference>
<dbReference type="Gene3D" id="4.10.860.120">
    <property type="entry name" value="RNA polymerase II, clamp domain"/>
    <property type="match status" value="1"/>
</dbReference>
<dbReference type="Gene3D" id="1.10.274.100">
    <property type="entry name" value="RNA polymerase Rpb1, domain 3"/>
    <property type="match status" value="2"/>
</dbReference>
<dbReference type="HAMAP" id="MF_01322">
    <property type="entry name" value="RNApol_bact_RpoC"/>
    <property type="match status" value="1"/>
</dbReference>
<dbReference type="InterPro" id="IPR045867">
    <property type="entry name" value="DNA-dir_RpoC_beta_prime"/>
</dbReference>
<dbReference type="InterPro" id="IPR012754">
    <property type="entry name" value="DNA-dir_RpoC_beta_prime_bact"/>
</dbReference>
<dbReference type="InterPro" id="IPR000722">
    <property type="entry name" value="RNA_pol_asu"/>
</dbReference>
<dbReference type="InterPro" id="IPR006592">
    <property type="entry name" value="RNA_pol_N"/>
</dbReference>
<dbReference type="InterPro" id="IPR007080">
    <property type="entry name" value="RNA_pol_Rpb1_1"/>
</dbReference>
<dbReference type="InterPro" id="IPR007066">
    <property type="entry name" value="RNA_pol_Rpb1_3"/>
</dbReference>
<dbReference type="InterPro" id="IPR042102">
    <property type="entry name" value="RNA_pol_Rpb1_3_sf"/>
</dbReference>
<dbReference type="InterPro" id="IPR007083">
    <property type="entry name" value="RNA_pol_Rpb1_4"/>
</dbReference>
<dbReference type="InterPro" id="IPR007081">
    <property type="entry name" value="RNA_pol_Rpb1_5"/>
</dbReference>
<dbReference type="InterPro" id="IPR044893">
    <property type="entry name" value="RNA_pol_Rpb1_clamp_domain"/>
</dbReference>
<dbReference type="InterPro" id="IPR038120">
    <property type="entry name" value="Rpb1_funnel_sf"/>
</dbReference>
<dbReference type="NCBIfam" id="TIGR02386">
    <property type="entry name" value="rpoC_TIGR"/>
    <property type="match status" value="1"/>
</dbReference>
<dbReference type="PANTHER" id="PTHR19376">
    <property type="entry name" value="DNA-DIRECTED RNA POLYMERASE"/>
    <property type="match status" value="1"/>
</dbReference>
<dbReference type="PANTHER" id="PTHR19376:SF54">
    <property type="entry name" value="DNA-DIRECTED RNA POLYMERASE SUBUNIT BETA"/>
    <property type="match status" value="1"/>
</dbReference>
<dbReference type="Pfam" id="PF04997">
    <property type="entry name" value="RNA_pol_Rpb1_1"/>
    <property type="match status" value="1"/>
</dbReference>
<dbReference type="Pfam" id="PF00623">
    <property type="entry name" value="RNA_pol_Rpb1_2"/>
    <property type="match status" value="2"/>
</dbReference>
<dbReference type="Pfam" id="PF04983">
    <property type="entry name" value="RNA_pol_Rpb1_3"/>
    <property type="match status" value="1"/>
</dbReference>
<dbReference type="Pfam" id="PF05000">
    <property type="entry name" value="RNA_pol_Rpb1_4"/>
    <property type="match status" value="1"/>
</dbReference>
<dbReference type="Pfam" id="PF04998">
    <property type="entry name" value="RNA_pol_Rpb1_5"/>
    <property type="match status" value="1"/>
</dbReference>
<dbReference type="SMART" id="SM00663">
    <property type="entry name" value="RPOLA_N"/>
    <property type="match status" value="1"/>
</dbReference>
<dbReference type="SUPFAM" id="SSF64484">
    <property type="entry name" value="beta and beta-prime subunits of DNA dependent RNA-polymerase"/>
    <property type="match status" value="1"/>
</dbReference>
<keyword id="KW-0240">DNA-directed RNA polymerase</keyword>
<keyword id="KW-0460">Magnesium</keyword>
<keyword id="KW-0479">Metal-binding</keyword>
<keyword id="KW-0548">Nucleotidyltransferase</keyword>
<keyword id="KW-1185">Reference proteome</keyword>
<keyword id="KW-0804">Transcription</keyword>
<keyword id="KW-0808">Transferase</keyword>
<keyword id="KW-0862">Zinc</keyword>
<accession>Q4FLL3</accession>